<reference key="1">
    <citation type="journal article" date="2001" name="Nature">
        <title>Genome sequence and gene compaction of the eukaryote parasite Encephalitozoon cuniculi.</title>
        <authorList>
            <person name="Katinka M.D."/>
            <person name="Duprat S."/>
            <person name="Cornillot E."/>
            <person name="Metenier G."/>
            <person name="Thomarat F."/>
            <person name="Prensier G."/>
            <person name="Barbe V."/>
            <person name="Peyretaillade E."/>
            <person name="Brottier P."/>
            <person name="Wincker P."/>
            <person name="Delbac F."/>
            <person name="El Alaoui H."/>
            <person name="Peyret P."/>
            <person name="Saurin W."/>
            <person name="Gouy M."/>
            <person name="Weissenbach J."/>
            <person name="Vivares C.P."/>
        </authorList>
    </citation>
    <scope>NUCLEOTIDE SEQUENCE [LARGE SCALE GENOMIC DNA]</scope>
    <source>
        <strain>GB-M1</strain>
    </source>
</reference>
<dbReference type="EMBL" id="AL590448">
    <property type="protein sequence ID" value="CAD26422.1"/>
    <property type="molecule type" value="Genomic_DNA"/>
</dbReference>
<dbReference type="RefSeq" id="NP_597246.1">
    <property type="nucleotide sequence ID" value="NM_001041855.1"/>
</dbReference>
<dbReference type="PDB" id="7QEP">
    <property type="method" value="EM"/>
    <property type="resolution" value="2.70 A"/>
    <property type="chains" value="N3=1-146"/>
</dbReference>
<dbReference type="PDBsum" id="7QEP"/>
<dbReference type="EMDB" id="EMD-13936"/>
<dbReference type="SMR" id="Q8SRA7"/>
<dbReference type="FunCoup" id="Q8SRA7">
    <property type="interactions" value="253"/>
</dbReference>
<dbReference type="STRING" id="284813.Q8SRA7"/>
<dbReference type="GeneID" id="859668"/>
<dbReference type="KEGG" id="ecu:ECU08_1160i"/>
<dbReference type="VEuPathDB" id="MicrosporidiaDB:ECU08_1160i"/>
<dbReference type="HOGENOM" id="CLU_095071_3_0_1"/>
<dbReference type="InParanoid" id="Q8SRA7"/>
<dbReference type="OMA" id="IRQSKPW"/>
<dbReference type="OrthoDB" id="407959at2759"/>
<dbReference type="Proteomes" id="UP000000819">
    <property type="component" value="Chromosome VIII"/>
</dbReference>
<dbReference type="GO" id="GO:0022625">
    <property type="term" value="C:cytosolic large ribosomal subunit"/>
    <property type="evidence" value="ECO:0007669"/>
    <property type="project" value="TreeGrafter"/>
</dbReference>
<dbReference type="GO" id="GO:0070180">
    <property type="term" value="F:large ribosomal subunit rRNA binding"/>
    <property type="evidence" value="ECO:0007669"/>
    <property type="project" value="TreeGrafter"/>
</dbReference>
<dbReference type="GO" id="GO:0003735">
    <property type="term" value="F:structural constituent of ribosome"/>
    <property type="evidence" value="ECO:0007669"/>
    <property type="project" value="InterPro"/>
</dbReference>
<dbReference type="GO" id="GO:0006412">
    <property type="term" value="P:translation"/>
    <property type="evidence" value="ECO:0007669"/>
    <property type="project" value="InterPro"/>
</dbReference>
<dbReference type="CDD" id="cd00337">
    <property type="entry name" value="Ribosomal_uL14"/>
    <property type="match status" value="1"/>
</dbReference>
<dbReference type="FunFam" id="2.40.150.20:FF:000007">
    <property type="entry name" value="50S ribosomal protein L14"/>
    <property type="match status" value="1"/>
</dbReference>
<dbReference type="Gene3D" id="2.40.150.20">
    <property type="entry name" value="Ribosomal protein L14"/>
    <property type="match status" value="1"/>
</dbReference>
<dbReference type="HAMAP" id="MF_01367">
    <property type="entry name" value="Ribosomal_uL14"/>
    <property type="match status" value="1"/>
</dbReference>
<dbReference type="InterPro" id="IPR000218">
    <property type="entry name" value="Ribosomal_uL14"/>
</dbReference>
<dbReference type="InterPro" id="IPR019972">
    <property type="entry name" value="Ribosomal_uL14_CS"/>
</dbReference>
<dbReference type="InterPro" id="IPR036853">
    <property type="entry name" value="Ribosomal_uL14_sf"/>
</dbReference>
<dbReference type="NCBIfam" id="NF006344">
    <property type="entry name" value="PRK08571.1"/>
    <property type="match status" value="1"/>
</dbReference>
<dbReference type="PANTHER" id="PTHR11761">
    <property type="entry name" value="50S/60S RIBOSOMAL PROTEIN L14/L23"/>
    <property type="match status" value="1"/>
</dbReference>
<dbReference type="PANTHER" id="PTHR11761:SF8">
    <property type="entry name" value="LARGE RIBOSOMAL SUBUNIT PROTEIN UL14"/>
    <property type="match status" value="1"/>
</dbReference>
<dbReference type="Pfam" id="PF00238">
    <property type="entry name" value="Ribosomal_L14"/>
    <property type="match status" value="1"/>
</dbReference>
<dbReference type="SMART" id="SM01374">
    <property type="entry name" value="Ribosomal_L14"/>
    <property type="match status" value="1"/>
</dbReference>
<dbReference type="SUPFAM" id="SSF50193">
    <property type="entry name" value="Ribosomal protein L14"/>
    <property type="match status" value="1"/>
</dbReference>
<dbReference type="PROSITE" id="PS00049">
    <property type="entry name" value="RIBOSOMAL_L14"/>
    <property type="match status" value="1"/>
</dbReference>
<comment type="similarity">
    <text evidence="1">Belongs to the universal ribosomal protein uL14 family.</text>
</comment>
<proteinExistence type="evidence at protein level"/>
<protein>
    <recommendedName>
        <fullName evidence="1">Large ribosomal subunit protein uL14</fullName>
    </recommendedName>
    <alternativeName>
        <fullName>60S ribosomal protein L23</fullName>
    </alternativeName>
</protein>
<organism>
    <name type="scientific">Encephalitozoon cuniculi (strain GB-M1)</name>
    <name type="common">Microsporidian parasite</name>
    <dbReference type="NCBI Taxonomy" id="284813"/>
    <lineage>
        <taxon>Eukaryota</taxon>
        <taxon>Fungi</taxon>
        <taxon>Fungi incertae sedis</taxon>
        <taxon>Microsporidia</taxon>
        <taxon>Unikaryonidae</taxon>
        <taxon>Encephalitozoon</taxon>
    </lineage>
</organism>
<accession>Q8SRA7</accession>
<sequence>MAAEKKTEVLEKKISIKPRYKMTRGIQVETLMKCADNSGAKILRCIGVKRYRGRLNRLPAAAPGDICVVSVKKGKPELRKKVHYAILIRQKKIWRRTDGSHIMFEDNAAVLINNKGELRGAQIAGPVPREVADMWPKISSQASSIN</sequence>
<keyword id="KW-0002">3D-structure</keyword>
<keyword id="KW-1185">Reference proteome</keyword>
<keyword id="KW-0687">Ribonucleoprotein</keyword>
<keyword id="KW-0689">Ribosomal protein</keyword>
<feature type="chain" id="PRO_0000128628" description="Large ribosomal subunit protein uL14">
    <location>
        <begin position="1"/>
        <end position="146"/>
    </location>
</feature>
<gene>
    <name type="primary">RPL23</name>
    <name type="ordered locus">ECU08_1160i</name>
</gene>
<evidence type="ECO:0000305" key="1"/>
<name>RL23_ENCCU</name>